<name>ORC1_MOUSE</name>
<protein>
    <recommendedName>
        <fullName>Origin recognition complex subunit 1</fullName>
    </recommendedName>
</protein>
<evidence type="ECO:0000250" key="1"/>
<evidence type="ECO:0000250" key="2">
    <source>
        <dbReference type="UniProtKB" id="Q13415"/>
    </source>
</evidence>
<evidence type="ECO:0000255" key="3">
    <source>
        <dbReference type="PROSITE-ProRule" id="PRU00370"/>
    </source>
</evidence>
<evidence type="ECO:0000256" key="4">
    <source>
        <dbReference type="SAM" id="MobiDB-lite"/>
    </source>
</evidence>
<evidence type="ECO:0000269" key="5">
    <source>
    </source>
</evidence>
<evidence type="ECO:0000305" key="6"/>
<evidence type="ECO:0007744" key="7">
    <source>
    </source>
</evidence>
<evidence type="ECO:0007829" key="8">
    <source>
        <dbReference type="PDB" id="4DOV"/>
    </source>
</evidence>
<evidence type="ECO:0007829" key="9">
    <source>
        <dbReference type="PDB" id="4DOW"/>
    </source>
</evidence>
<reference key="1">
    <citation type="journal article" date="1998" name="Mol. Gen. Genet.">
        <title>Mouse homolog of the yeast origin recognition complex subunit ORC1 and chromosomal localization of the cognate mouse gene Orc1.</title>
        <authorList>
            <person name="Zisimopoulou P."/>
            <person name="Staib C."/>
            <person name="Nanda I."/>
            <person name="Schmid M."/>
            <person name="Grummt F."/>
        </authorList>
    </citation>
    <scope>NUCLEOTIDE SEQUENCE [MRNA]</scope>
</reference>
<reference key="2">
    <citation type="journal article" date="2009" name="PLoS Biol.">
        <title>Lineage-specific biology revealed by a finished genome assembly of the mouse.</title>
        <authorList>
            <person name="Church D.M."/>
            <person name="Goodstadt L."/>
            <person name="Hillier L.W."/>
            <person name="Zody M.C."/>
            <person name="Goldstein S."/>
            <person name="She X."/>
            <person name="Bult C.J."/>
            <person name="Agarwala R."/>
            <person name="Cherry J.L."/>
            <person name="DiCuccio M."/>
            <person name="Hlavina W."/>
            <person name="Kapustin Y."/>
            <person name="Meric P."/>
            <person name="Maglott D."/>
            <person name="Birtle Z."/>
            <person name="Marques A.C."/>
            <person name="Graves T."/>
            <person name="Zhou S."/>
            <person name="Teague B."/>
            <person name="Potamousis K."/>
            <person name="Churas C."/>
            <person name="Place M."/>
            <person name="Herschleb J."/>
            <person name="Runnheim R."/>
            <person name="Forrest D."/>
            <person name="Amos-Landgraf J."/>
            <person name="Schwartz D.C."/>
            <person name="Cheng Z."/>
            <person name="Lindblad-Toh K."/>
            <person name="Eichler E.E."/>
            <person name="Ponting C.P."/>
        </authorList>
    </citation>
    <scope>NUCLEOTIDE SEQUENCE [LARGE SCALE GENOMIC DNA]</scope>
    <source>
        <strain>C57BL/6J</strain>
    </source>
</reference>
<reference key="3">
    <citation type="journal article" date="2004" name="Genome Res.">
        <title>The status, quality, and expansion of the NIH full-length cDNA project: the Mammalian Gene Collection (MGC).</title>
        <authorList>
            <consortium name="The MGC Project Team"/>
        </authorList>
    </citation>
    <scope>NUCLEOTIDE SEQUENCE [LARGE SCALE MRNA]</scope>
    <source>
        <strain>Czech II</strain>
        <tissue>Mammary gland</tissue>
    </source>
</reference>
<reference key="4">
    <citation type="journal article" date="2010" name="Cell">
        <title>A tissue-specific atlas of mouse protein phosphorylation and expression.</title>
        <authorList>
            <person name="Huttlin E.L."/>
            <person name="Jedrychowski M.P."/>
            <person name="Elias J.E."/>
            <person name="Goswami T."/>
            <person name="Rad R."/>
            <person name="Beausoleil S.A."/>
            <person name="Villen J."/>
            <person name="Haas W."/>
            <person name="Sowa M.E."/>
            <person name="Gygi S.P."/>
        </authorList>
    </citation>
    <scope>PHOSPHORYLATION [LARGE SCALE ANALYSIS] AT SER-255; SER-258 AND SER-332</scope>
    <scope>IDENTIFICATION BY MASS SPECTROMETRY [LARGE SCALE ANALYSIS]</scope>
    <source>
        <tissue>Spleen</tissue>
    </source>
</reference>
<reference key="5">
    <citation type="journal article" date="2012" name="Nature">
        <title>The BAH domain of ORC1 links H4K20me2 to DNA replication licensing and Meier-Gorlin syndrome.</title>
        <authorList>
            <person name="Kuo A.J."/>
            <person name="Song J."/>
            <person name="Cheung P."/>
            <person name="Ishibe-Murakami S."/>
            <person name="Yamazoe S."/>
            <person name="Chen J.K."/>
            <person name="Patel D.J."/>
            <person name="Gozani O."/>
        </authorList>
    </citation>
    <scope>X-RAY CRYSTALLOGRAPHY (1.7 ANGSTROMS) OF 9-170</scope>
    <scope>INTERACTION WITH H4K20ME2</scope>
</reference>
<proteinExistence type="evidence at protein level"/>
<comment type="function">
    <text evidence="1">Component of the origin recognition complex (ORC) that binds origins of replication. DNA-binding is ATP-dependent. The specific DNA sequences that define origins of replication have not been identified yet. ORC is required to assemble the pre-replication complex necessary to initiate DNA replication (By similarity).</text>
</comment>
<comment type="subunit">
    <text evidence="1">Component of ORC, a complex composed of at least 6 subunits: ORC1, ORC2, ORC3, ORC4, ORC5 and ORC6. ORC is regulated in a cell-cycle dependent manner. It is sequentially assembled at the exit from anaphase of mitosis and disassembled as cells enter S phase (By similarity). Interacts with CDC6 and KAT7/HBO1 (By similarity). Interacts with LRWD1 predominantly during the G1 phase and with less affinity during mitosis, when phosphorylated (By similarity).</text>
</comment>
<comment type="subcellular location">
    <subcellularLocation>
        <location evidence="1">Nucleus</location>
    </subcellularLocation>
</comment>
<comment type="domain">
    <text>The BAH domain mediates binding to dimethylated histone H4 'Lys-20' (H4K20me2), which is enriched at replication origins.</text>
</comment>
<comment type="PTM">
    <text evidence="1">Phosphorylated during mitosis.</text>
</comment>
<comment type="similarity">
    <text evidence="6">Belongs to the ORC1 family.</text>
</comment>
<organism>
    <name type="scientific">Mus musculus</name>
    <name type="common">Mouse</name>
    <dbReference type="NCBI Taxonomy" id="10090"/>
    <lineage>
        <taxon>Eukaryota</taxon>
        <taxon>Metazoa</taxon>
        <taxon>Chordata</taxon>
        <taxon>Craniata</taxon>
        <taxon>Vertebrata</taxon>
        <taxon>Euteleostomi</taxon>
        <taxon>Mammalia</taxon>
        <taxon>Eutheria</taxon>
        <taxon>Euarchontoglires</taxon>
        <taxon>Glires</taxon>
        <taxon>Rodentia</taxon>
        <taxon>Myomorpha</taxon>
        <taxon>Muroidea</taxon>
        <taxon>Muridae</taxon>
        <taxon>Murinae</taxon>
        <taxon>Mus</taxon>
        <taxon>Mus</taxon>
    </lineage>
</organism>
<sequence length="840" mass="95103">MPSYLTRQKTRQTFSWVGRPLPNRKQFQQMYREICMKINDGSEIHIKVGQFVLIQGEDNKKPYVAKLIELFQNGAEVPPKKCARVQWFVRFLEIPVSKRHLLGRSPPAQEIFWYDCSDWDNKINVETIIGPVQVVALAPEEVIPVDQKSEETLFVKLSWNKKDFAPLPPEVLAALREQEDSPEWQKPLKAKIKNVKSPARNTTEQEVKGIKSNHSTSKFHQTPANIVIPNAKKSLELDGLGFTRKPNTRWSKKSSCDSLDYQKTSKRRAAFSETTSPPKKPNKPREIKPSSALETRVKNGQTQPFCAKSSVVLRARNPAMTTTKLGVDNTLSPIRNGLRSSVVPSGGLTPVYIRRKAKEQETHKEPIRTSRVHRKSSLLTLKRIRQQLCLLDGDDRDQEEEESVDSESEEEDEFISSLPTRNSLGQSRTRQTPSKSPQKNPKPRTPHRATPQIRDRNLAVQEPASALEEARLRLHVSAVPDSLPCREQEFQDIYSFVESKLLDGTGGCMYISGVPGTGKTATVHEVIRCLQQAAETDDVPPFQYVEVNGMKLTEPHQVYVQILKKLTGQKATANHAAELLAKQFCGQGSQKETTVLLVDELDLLWTHKQDVMYNLFDWPTHKGAHLIVLTIANTMDLPERIMMNRVSSRLGLTRMSFQPYSHSQLKQILVSRLRNLRAFEDDAIQLVARKVAALSGDARRCLDICRRATEICELSHLRGDSLSLVTVAHLMEAIDEMFSSSYITAIKNSSVVEQSFLRAIIAEFRRSGLEEATFQQIYSQHVALCRMEGLPYPTMSETMAVCSRLGSCRLLLVEPSRNDLLLRVRLNVSQNDVLFALKEE</sequence>
<keyword id="KW-0002">3D-structure</keyword>
<keyword id="KW-0067">ATP-binding</keyword>
<keyword id="KW-0235">DNA replication</keyword>
<keyword id="KW-0238">DNA-binding</keyword>
<keyword id="KW-0460">Magnesium</keyword>
<keyword id="KW-0479">Metal-binding</keyword>
<keyword id="KW-0547">Nucleotide-binding</keyword>
<keyword id="KW-0539">Nucleus</keyword>
<keyword id="KW-0597">Phosphoprotein</keyword>
<keyword id="KW-1185">Reference proteome</keyword>
<feature type="chain" id="PRO_0000127068" description="Origin recognition complex subunit 1">
    <location>
        <begin position="1"/>
        <end position="840"/>
    </location>
</feature>
<feature type="domain" description="BAH" evidence="3">
    <location>
        <begin position="44"/>
        <end position="170"/>
    </location>
</feature>
<feature type="region of interest" description="Disordered" evidence="4">
    <location>
        <begin position="195"/>
        <end position="218"/>
    </location>
</feature>
<feature type="region of interest" description="Disordered" evidence="4">
    <location>
        <begin position="242"/>
        <end position="301"/>
    </location>
</feature>
<feature type="region of interest" description="Disordered" evidence="4">
    <location>
        <begin position="392"/>
        <end position="456"/>
    </location>
</feature>
<feature type="region of interest" description="Necessary and sufficient for ORC complex assembly" evidence="1">
    <location>
        <begin position="480"/>
        <end position="840"/>
    </location>
</feature>
<feature type="compositionally biased region" description="Acidic residues" evidence="4">
    <location>
        <begin position="392"/>
        <end position="414"/>
    </location>
</feature>
<feature type="compositionally biased region" description="Polar residues" evidence="4">
    <location>
        <begin position="418"/>
        <end position="439"/>
    </location>
</feature>
<feature type="binding site" evidence="2">
    <location>
        <position position="479"/>
    </location>
    <ligand>
        <name>ATP</name>
        <dbReference type="ChEBI" id="CHEBI:30616"/>
    </ligand>
</feature>
<feature type="binding site" evidence="2">
    <location>
        <begin position="513"/>
        <end position="521"/>
    </location>
    <ligand>
        <name>ATP</name>
        <dbReference type="ChEBI" id="CHEBI:30616"/>
    </ligand>
</feature>
<feature type="binding site" evidence="2">
    <location>
        <position position="599"/>
    </location>
    <ligand>
        <name>Mg(2+)</name>
        <dbReference type="ChEBI" id="CHEBI:18420"/>
    </ligand>
</feature>
<feature type="binding site" evidence="2">
    <location>
        <position position="600"/>
    </location>
    <ligand>
        <name>ATP</name>
        <dbReference type="ChEBI" id="CHEBI:30616"/>
    </ligand>
</feature>
<feature type="binding site" evidence="2">
    <location>
        <position position="600"/>
    </location>
    <ligand>
        <name>Mg(2+)</name>
        <dbReference type="ChEBI" id="CHEBI:18420"/>
    </ligand>
</feature>
<feature type="binding site" evidence="2">
    <location>
        <position position="633"/>
    </location>
    <ligand>
        <name>ATP</name>
        <dbReference type="ChEBI" id="CHEBI:30616"/>
    </ligand>
</feature>
<feature type="binding site" evidence="2">
    <location>
        <position position="699"/>
    </location>
    <ligand>
        <name>ATP</name>
        <dbReference type="ChEBI" id="CHEBI:30616"/>
    </ligand>
</feature>
<feature type="site" description="Histone H4K20me2 binding" evidence="5">
    <location>
        <position position="93"/>
    </location>
</feature>
<feature type="modified residue" description="Phosphoserine" evidence="2">
    <location>
        <position position="197"/>
    </location>
</feature>
<feature type="modified residue" description="Phosphoserine" evidence="7">
    <location>
        <position position="255"/>
    </location>
</feature>
<feature type="modified residue" description="Phosphoserine" evidence="7">
    <location>
        <position position="258"/>
    </location>
</feature>
<feature type="modified residue" description="Phosphoserine" evidence="2">
    <location>
        <position position="276"/>
    </location>
</feature>
<feature type="modified residue" description="Phosphoserine" evidence="2">
    <location>
        <position position="291"/>
    </location>
</feature>
<feature type="modified residue" description="Phosphoserine" evidence="7">
    <location>
        <position position="332"/>
    </location>
</feature>
<feature type="sequence conflict" description="In Ref. 1; CAA05890 and 3; AAH15073." evidence="6" ref="1 3">
    <original>N</original>
    <variation>S</variation>
    <location>
        <position position="230"/>
    </location>
</feature>
<feature type="strand" evidence="8">
    <location>
        <begin position="13"/>
        <end position="18"/>
    </location>
</feature>
<feature type="strand" evidence="8">
    <location>
        <begin position="28"/>
        <end position="37"/>
    </location>
</feature>
<feature type="strand" evidence="8">
    <location>
        <begin position="43"/>
        <end position="47"/>
    </location>
</feature>
<feature type="strand" evidence="8">
    <location>
        <begin position="51"/>
        <end position="54"/>
    </location>
</feature>
<feature type="strand" evidence="8">
    <location>
        <begin position="57"/>
        <end position="60"/>
    </location>
</feature>
<feature type="strand" evidence="8">
    <location>
        <begin position="63"/>
        <end position="73"/>
    </location>
</feature>
<feature type="strand" evidence="8">
    <location>
        <begin position="76"/>
        <end position="78"/>
    </location>
</feature>
<feature type="strand" evidence="8">
    <location>
        <begin position="80"/>
        <end position="90"/>
    </location>
</feature>
<feature type="helix" evidence="8">
    <location>
        <begin position="91"/>
        <end position="93"/>
    </location>
</feature>
<feature type="turn" evidence="8">
    <location>
        <begin position="96"/>
        <end position="98"/>
    </location>
</feature>
<feature type="helix" evidence="8">
    <location>
        <begin position="99"/>
        <end position="102"/>
    </location>
</feature>
<feature type="strand" evidence="8">
    <location>
        <begin position="110"/>
        <end position="114"/>
    </location>
</feature>
<feature type="strand" evidence="9">
    <location>
        <begin position="117"/>
        <end position="119"/>
    </location>
</feature>
<feature type="strand" evidence="8">
    <location>
        <begin position="122"/>
        <end position="124"/>
    </location>
</feature>
<feature type="helix" evidence="8">
    <location>
        <begin position="125"/>
        <end position="127"/>
    </location>
</feature>
<feature type="strand" evidence="8">
    <location>
        <begin position="128"/>
        <end position="136"/>
    </location>
</feature>
<feature type="strand" evidence="8">
    <location>
        <begin position="151"/>
        <end position="159"/>
    </location>
</feature>
<feature type="strand" evidence="8">
    <location>
        <begin position="164"/>
        <end position="166"/>
    </location>
</feature>
<dbReference type="EMBL" id="AJ003133">
    <property type="protein sequence ID" value="CAA05890.1"/>
    <property type="molecule type" value="mRNA"/>
</dbReference>
<dbReference type="EMBL" id="AL626783">
    <property type="status" value="NOT_ANNOTATED_CDS"/>
    <property type="molecule type" value="Genomic_DNA"/>
</dbReference>
<dbReference type="EMBL" id="BC015073">
    <property type="protein sequence ID" value="AAH15073.1"/>
    <property type="molecule type" value="mRNA"/>
</dbReference>
<dbReference type="CCDS" id="CCDS18453.1"/>
<dbReference type="RefSeq" id="NP_035145.2">
    <property type="nucleotide sequence ID" value="NM_011015.2"/>
</dbReference>
<dbReference type="PDB" id="4DOV">
    <property type="method" value="X-ray"/>
    <property type="resolution" value="1.70 A"/>
    <property type="chains" value="A/C=9-170"/>
</dbReference>
<dbReference type="PDB" id="4DOW">
    <property type="method" value="X-ray"/>
    <property type="resolution" value="1.95 A"/>
    <property type="chains" value="A/B=9-170"/>
</dbReference>
<dbReference type="PDBsum" id="4DOV"/>
<dbReference type="PDBsum" id="4DOW"/>
<dbReference type="SMR" id="Q9Z1N2"/>
<dbReference type="BioGRID" id="201974">
    <property type="interactions" value="12"/>
</dbReference>
<dbReference type="ComplexPortal" id="CPX-1915">
    <property type="entry name" value="Nuclear origin recognition complex"/>
</dbReference>
<dbReference type="CORUM" id="Q9Z1N2"/>
<dbReference type="DIP" id="DIP-32115N"/>
<dbReference type="FunCoup" id="Q9Z1N2">
    <property type="interactions" value="681"/>
</dbReference>
<dbReference type="IntAct" id="Q9Z1N2">
    <property type="interactions" value="6"/>
</dbReference>
<dbReference type="STRING" id="10090.ENSMUSP00000099805"/>
<dbReference type="GlyGen" id="Q9Z1N2">
    <property type="glycosylation" value="1 site"/>
</dbReference>
<dbReference type="iPTMnet" id="Q9Z1N2"/>
<dbReference type="PhosphoSitePlus" id="Q9Z1N2"/>
<dbReference type="jPOST" id="Q9Z1N2"/>
<dbReference type="PaxDb" id="10090-ENSMUSP00000099805"/>
<dbReference type="PeptideAtlas" id="Q9Z1N2"/>
<dbReference type="ProteomicsDB" id="293939"/>
<dbReference type="Pumba" id="Q9Z1N2"/>
<dbReference type="Antibodypedia" id="19104">
    <property type="antibodies" value="227 antibodies from 32 providers"/>
</dbReference>
<dbReference type="DNASU" id="18392"/>
<dbReference type="Ensembl" id="ENSMUST00000102744.4">
    <property type="protein sequence ID" value="ENSMUSP00000099805.4"/>
    <property type="gene ID" value="ENSMUSG00000028587.19"/>
</dbReference>
<dbReference type="GeneID" id="18392"/>
<dbReference type="KEGG" id="mmu:18392"/>
<dbReference type="UCSC" id="uc008ubh.2">
    <property type="organism name" value="mouse"/>
</dbReference>
<dbReference type="AGR" id="MGI:1328337"/>
<dbReference type="CTD" id="4998"/>
<dbReference type="MGI" id="MGI:1328337">
    <property type="gene designation" value="Orc1"/>
</dbReference>
<dbReference type="VEuPathDB" id="HostDB:ENSMUSG00000028587"/>
<dbReference type="eggNOG" id="KOG1514">
    <property type="taxonomic scope" value="Eukaryota"/>
</dbReference>
<dbReference type="GeneTree" id="ENSGT00530000063498"/>
<dbReference type="HOGENOM" id="CLU_012774_0_1_1"/>
<dbReference type="InParanoid" id="Q9Z1N2"/>
<dbReference type="OMA" id="CEVPVCK"/>
<dbReference type="OrthoDB" id="1926878at2759"/>
<dbReference type="PhylomeDB" id="Q9Z1N2"/>
<dbReference type="TreeFam" id="TF313743"/>
<dbReference type="Reactome" id="R-MMU-176187">
    <property type="pathway name" value="Activation of ATR in response to replication stress"/>
</dbReference>
<dbReference type="Reactome" id="R-MMU-68616">
    <property type="pathway name" value="Assembly of the ORC complex at the origin of replication"/>
</dbReference>
<dbReference type="Reactome" id="R-MMU-68689">
    <property type="pathway name" value="CDC6 association with the ORC:origin complex"/>
</dbReference>
<dbReference type="Reactome" id="R-MMU-68949">
    <property type="pathway name" value="Orc1 removal from chromatin"/>
</dbReference>
<dbReference type="Reactome" id="R-MMU-68962">
    <property type="pathway name" value="Activation of the pre-replicative complex"/>
</dbReference>
<dbReference type="BioGRID-ORCS" id="18392">
    <property type="hits" value="25 hits in 83 CRISPR screens"/>
</dbReference>
<dbReference type="CD-CODE" id="01CA17F3">
    <property type="entry name" value="Centrosome"/>
</dbReference>
<dbReference type="ChiTaRS" id="Orc1">
    <property type="organism name" value="mouse"/>
</dbReference>
<dbReference type="EvolutionaryTrace" id="Q9Z1N2"/>
<dbReference type="PRO" id="PR:Q9Z1N2"/>
<dbReference type="Proteomes" id="UP000000589">
    <property type="component" value="Chromosome 4"/>
</dbReference>
<dbReference type="RNAct" id="Q9Z1N2">
    <property type="molecule type" value="protein"/>
</dbReference>
<dbReference type="Bgee" id="ENSMUSG00000028587">
    <property type="expression patterns" value="Expressed in animal zygote and 141 other cell types or tissues"/>
</dbReference>
<dbReference type="GO" id="GO:0000781">
    <property type="term" value="C:chromosome, telomeric region"/>
    <property type="evidence" value="ECO:0007669"/>
    <property type="project" value="Ensembl"/>
</dbReference>
<dbReference type="GO" id="GO:0005664">
    <property type="term" value="C:nuclear origin of replication recognition complex"/>
    <property type="evidence" value="ECO:0000250"/>
    <property type="project" value="UniProtKB"/>
</dbReference>
<dbReference type="GO" id="GO:0005654">
    <property type="term" value="C:nucleoplasm"/>
    <property type="evidence" value="ECO:0007669"/>
    <property type="project" value="Ensembl"/>
</dbReference>
<dbReference type="GO" id="GO:0005634">
    <property type="term" value="C:nucleus"/>
    <property type="evidence" value="ECO:0000304"/>
    <property type="project" value="MGI"/>
</dbReference>
<dbReference type="GO" id="GO:0005524">
    <property type="term" value="F:ATP binding"/>
    <property type="evidence" value="ECO:0007669"/>
    <property type="project" value="UniProtKB-KW"/>
</dbReference>
<dbReference type="GO" id="GO:0016887">
    <property type="term" value="F:ATP hydrolysis activity"/>
    <property type="evidence" value="ECO:0007669"/>
    <property type="project" value="InterPro"/>
</dbReference>
<dbReference type="GO" id="GO:0003682">
    <property type="term" value="F:chromatin binding"/>
    <property type="evidence" value="ECO:0007669"/>
    <property type="project" value="InterPro"/>
</dbReference>
<dbReference type="GO" id="GO:0003677">
    <property type="term" value="F:DNA binding"/>
    <property type="evidence" value="ECO:0000304"/>
    <property type="project" value="MGI"/>
</dbReference>
<dbReference type="GO" id="GO:0046872">
    <property type="term" value="F:metal ion binding"/>
    <property type="evidence" value="ECO:0007669"/>
    <property type="project" value="UniProtKB-KW"/>
</dbReference>
<dbReference type="GO" id="GO:0006260">
    <property type="term" value="P:DNA replication"/>
    <property type="evidence" value="ECO:0000304"/>
    <property type="project" value="MGI"/>
</dbReference>
<dbReference type="GO" id="GO:0006270">
    <property type="term" value="P:DNA replication initiation"/>
    <property type="evidence" value="ECO:0000266"/>
    <property type="project" value="ComplexPortal"/>
</dbReference>
<dbReference type="CDD" id="cd08768">
    <property type="entry name" value="Cdc6_C"/>
    <property type="match status" value="1"/>
</dbReference>
<dbReference type="FunFam" id="1.10.8.60:FF:000062">
    <property type="entry name" value="Origin recognition complex subunit 1"/>
    <property type="match status" value="1"/>
</dbReference>
<dbReference type="FunFam" id="2.30.30.490:FF:000010">
    <property type="entry name" value="Origin recognition complex subunit 1"/>
    <property type="match status" value="1"/>
</dbReference>
<dbReference type="FunFam" id="3.40.50.300:FF:000199">
    <property type="entry name" value="Origin recognition complex subunit 1"/>
    <property type="match status" value="1"/>
</dbReference>
<dbReference type="Gene3D" id="2.30.30.490">
    <property type="match status" value="1"/>
</dbReference>
<dbReference type="Gene3D" id="3.40.50.300">
    <property type="entry name" value="P-loop containing nucleotide triphosphate hydrolases"/>
    <property type="match status" value="1"/>
</dbReference>
<dbReference type="InterPro" id="IPR003593">
    <property type="entry name" value="AAA+_ATPase"/>
</dbReference>
<dbReference type="InterPro" id="IPR041083">
    <property type="entry name" value="AAA_lid_10"/>
</dbReference>
<dbReference type="InterPro" id="IPR003959">
    <property type="entry name" value="ATPase_AAA_core"/>
</dbReference>
<dbReference type="InterPro" id="IPR001025">
    <property type="entry name" value="BAH_dom"/>
</dbReference>
<dbReference type="InterPro" id="IPR043151">
    <property type="entry name" value="BAH_sf"/>
</dbReference>
<dbReference type="InterPro" id="IPR015163">
    <property type="entry name" value="Cdc6_C"/>
</dbReference>
<dbReference type="InterPro" id="IPR050311">
    <property type="entry name" value="ORC1/CDC6"/>
</dbReference>
<dbReference type="InterPro" id="IPR027417">
    <property type="entry name" value="P-loop_NTPase"/>
</dbReference>
<dbReference type="PANTHER" id="PTHR10763">
    <property type="entry name" value="CELL DIVISION CONTROL PROTEIN 6-RELATED"/>
    <property type="match status" value="1"/>
</dbReference>
<dbReference type="PANTHER" id="PTHR10763:SF23">
    <property type="entry name" value="ORIGIN RECOGNITION COMPLEX SUBUNIT 1"/>
    <property type="match status" value="1"/>
</dbReference>
<dbReference type="Pfam" id="PF00004">
    <property type="entry name" value="AAA"/>
    <property type="match status" value="1"/>
</dbReference>
<dbReference type="Pfam" id="PF17872">
    <property type="entry name" value="AAA_lid_10"/>
    <property type="match status" value="1"/>
</dbReference>
<dbReference type="Pfam" id="PF01426">
    <property type="entry name" value="BAH"/>
    <property type="match status" value="1"/>
</dbReference>
<dbReference type="Pfam" id="PF09079">
    <property type="entry name" value="Cdc6_C"/>
    <property type="match status" value="1"/>
</dbReference>
<dbReference type="SMART" id="SM00382">
    <property type="entry name" value="AAA"/>
    <property type="match status" value="1"/>
</dbReference>
<dbReference type="SMART" id="SM00439">
    <property type="entry name" value="BAH"/>
    <property type="match status" value="1"/>
</dbReference>
<dbReference type="SMART" id="SM01074">
    <property type="entry name" value="Cdc6_C"/>
    <property type="match status" value="1"/>
</dbReference>
<dbReference type="SUPFAM" id="SSF52540">
    <property type="entry name" value="P-loop containing nucleoside triphosphate hydrolases"/>
    <property type="match status" value="1"/>
</dbReference>
<dbReference type="PROSITE" id="PS51038">
    <property type="entry name" value="BAH"/>
    <property type="match status" value="1"/>
</dbReference>
<gene>
    <name type="primary">Orc1</name>
    <name type="synonym">Orc1l</name>
</gene>
<accession>Q9Z1N2</accession>
<accession>A2A8R3</accession>